<name>CPT5_SOLLC</name>
<keyword id="KW-0150">Chloroplast</keyword>
<keyword id="KW-0460">Magnesium</keyword>
<keyword id="KW-0479">Metal-binding</keyword>
<keyword id="KW-0934">Plastid</keyword>
<keyword id="KW-1185">Reference proteome</keyword>
<keyword id="KW-0808">Transferase</keyword>
<keyword id="KW-0809">Transit peptide</keyword>
<comment type="function">
    <text evidence="3">Catalyzes cis-prenyl chain elongation to produce the polyprenyl backbone of dolichol, a glycosyl carrier-lipid required for the biosynthesis of several classes of glycoprotein.</text>
</comment>
<comment type="catalytic activity">
    <reaction evidence="3">
        <text>n isopentenyl diphosphate + (2E,6E)-farnesyl diphosphate = a di-trans,poly-cis-polyprenyl diphosphate + n diphosphate</text>
        <dbReference type="Rhea" id="RHEA:53008"/>
        <dbReference type="Rhea" id="RHEA-COMP:19494"/>
        <dbReference type="ChEBI" id="CHEBI:33019"/>
        <dbReference type="ChEBI" id="CHEBI:128769"/>
        <dbReference type="ChEBI" id="CHEBI:136960"/>
        <dbReference type="ChEBI" id="CHEBI:175763"/>
        <dbReference type="EC" id="2.5.1.87"/>
    </reaction>
    <physiologicalReaction direction="left-to-right" evidence="3">
        <dbReference type="Rhea" id="RHEA:53009"/>
    </physiologicalReaction>
</comment>
<comment type="cofactor">
    <cofactor evidence="3">
        <name>Mg(2+)</name>
        <dbReference type="ChEBI" id="CHEBI:18420"/>
    </cofactor>
</comment>
<comment type="subcellular location">
    <subcellularLocation>
        <location evidence="3">Plastid</location>
        <location evidence="3">Chloroplast</location>
    </subcellularLocation>
</comment>
<comment type="tissue specificity">
    <text evidence="3">Expressed in leaf trichomes, stem trichomes and old leaves (PubMed:23134568). Expressed at low levels in young leaves and flowers (PubMed:23134568).</text>
</comment>
<comment type="similarity">
    <text evidence="5">Belongs to the UPP synthase family.</text>
</comment>
<accession>K7X479</accession>
<accession>A0A494GA08</accession>
<dbReference type="EC" id="2.5.1.87" evidence="3"/>
<dbReference type="EMBL" id="JX943887">
    <property type="protein sequence ID" value="AFW98429.1"/>
    <property type="molecule type" value="Genomic_DNA"/>
</dbReference>
<dbReference type="EMBL" id="CM001073">
    <property type="status" value="NOT_ANNOTATED_CDS"/>
    <property type="molecule type" value="Genomic_DNA"/>
</dbReference>
<dbReference type="SMR" id="K7X479"/>
<dbReference type="FunCoup" id="K7X479">
    <property type="interactions" value="12"/>
</dbReference>
<dbReference type="STRING" id="4081.A0A494GA08"/>
<dbReference type="PaxDb" id="4081-Solyc00g136560.2.1"/>
<dbReference type="InParanoid" id="K7X479"/>
<dbReference type="Proteomes" id="UP000004994">
    <property type="component" value="Unplaced"/>
</dbReference>
<dbReference type="ExpressionAtlas" id="K7X479">
    <property type="expression patterns" value="baseline and differential"/>
</dbReference>
<dbReference type="GO" id="GO:0009507">
    <property type="term" value="C:chloroplast"/>
    <property type="evidence" value="ECO:0000314"/>
    <property type="project" value="UniProtKB"/>
</dbReference>
<dbReference type="GO" id="GO:0009570">
    <property type="term" value="C:chloroplast stroma"/>
    <property type="evidence" value="ECO:0000318"/>
    <property type="project" value="GO_Central"/>
</dbReference>
<dbReference type="GO" id="GO:0045547">
    <property type="term" value="F:ditrans,polycis-polyprenyl diphosphate synthase [(2E,6E)-farnesyl diphosphate specific] activity"/>
    <property type="evidence" value="ECO:0007669"/>
    <property type="project" value="UniProtKB-EC"/>
</dbReference>
<dbReference type="GO" id="GO:0000287">
    <property type="term" value="F:magnesium ion binding"/>
    <property type="evidence" value="ECO:0000314"/>
    <property type="project" value="UniProtKB"/>
</dbReference>
<dbReference type="GO" id="GO:0004659">
    <property type="term" value="F:prenyltransferase activity"/>
    <property type="evidence" value="ECO:0000314"/>
    <property type="project" value="UniProtKB"/>
</dbReference>
<dbReference type="GO" id="GO:0009668">
    <property type="term" value="P:plastid membrane organization"/>
    <property type="evidence" value="ECO:0000318"/>
    <property type="project" value="GO_Central"/>
</dbReference>
<dbReference type="GO" id="GO:0016094">
    <property type="term" value="P:polyprenol biosynthetic process"/>
    <property type="evidence" value="ECO:0000318"/>
    <property type="project" value="GO_Central"/>
</dbReference>
<dbReference type="GO" id="GO:0009409">
    <property type="term" value="P:response to cold"/>
    <property type="evidence" value="ECO:0000318"/>
    <property type="project" value="GO_Central"/>
</dbReference>
<dbReference type="CDD" id="cd00475">
    <property type="entry name" value="Cis_IPPS"/>
    <property type="match status" value="1"/>
</dbReference>
<dbReference type="FunFam" id="3.40.1180.10:FF:000001">
    <property type="entry name" value="(2E,6E)-farnesyl-diphosphate-specific ditrans,polycis-undecaprenyl-diphosphate synthase"/>
    <property type="match status" value="1"/>
</dbReference>
<dbReference type="Gene3D" id="3.40.1180.10">
    <property type="entry name" value="Decaprenyl diphosphate synthase-like"/>
    <property type="match status" value="1"/>
</dbReference>
<dbReference type="HAMAP" id="MF_01139">
    <property type="entry name" value="ISPT"/>
    <property type="match status" value="1"/>
</dbReference>
<dbReference type="InterPro" id="IPR001441">
    <property type="entry name" value="UPP_synth-like"/>
</dbReference>
<dbReference type="InterPro" id="IPR018520">
    <property type="entry name" value="UPP_synth-like_CS"/>
</dbReference>
<dbReference type="InterPro" id="IPR036424">
    <property type="entry name" value="UPP_synth-like_sf"/>
</dbReference>
<dbReference type="NCBIfam" id="TIGR00055">
    <property type="entry name" value="uppS"/>
    <property type="match status" value="1"/>
</dbReference>
<dbReference type="PANTHER" id="PTHR10291:SF0">
    <property type="entry name" value="DEHYDRODOLICHYL DIPHOSPHATE SYNTHASE 2"/>
    <property type="match status" value="1"/>
</dbReference>
<dbReference type="PANTHER" id="PTHR10291">
    <property type="entry name" value="DEHYDRODOLICHYL DIPHOSPHATE SYNTHASE FAMILY MEMBER"/>
    <property type="match status" value="1"/>
</dbReference>
<dbReference type="Pfam" id="PF01255">
    <property type="entry name" value="Prenyltransf"/>
    <property type="match status" value="1"/>
</dbReference>
<dbReference type="SUPFAM" id="SSF64005">
    <property type="entry name" value="Undecaprenyl diphosphate synthase"/>
    <property type="match status" value="1"/>
</dbReference>
<dbReference type="PROSITE" id="PS01066">
    <property type="entry name" value="UPP_SYNTHASE"/>
    <property type="match status" value="1"/>
</dbReference>
<proteinExistence type="evidence at protein level"/>
<protein>
    <recommendedName>
        <fullName evidence="5">Dehydrodolichyl diphosphate synthase CPT5, chloroplastic</fullName>
        <ecNumber evidence="3">2.5.1.87</ecNumber>
    </recommendedName>
    <alternativeName>
        <fullName evidence="4">Cis-prenyltransferase 5</fullName>
        <shortName evidence="4">SlCPT5</shortName>
    </alternativeName>
</protein>
<organism>
    <name type="scientific">Solanum lycopersicum</name>
    <name type="common">Tomato</name>
    <name type="synonym">Lycopersicon esculentum</name>
    <dbReference type="NCBI Taxonomy" id="4081"/>
    <lineage>
        <taxon>Eukaryota</taxon>
        <taxon>Viridiplantae</taxon>
        <taxon>Streptophyta</taxon>
        <taxon>Embryophyta</taxon>
        <taxon>Tracheophyta</taxon>
        <taxon>Spermatophyta</taxon>
        <taxon>Magnoliopsida</taxon>
        <taxon>eudicotyledons</taxon>
        <taxon>Gunneridae</taxon>
        <taxon>Pentapetalae</taxon>
        <taxon>asterids</taxon>
        <taxon>lamiids</taxon>
        <taxon>Solanales</taxon>
        <taxon>Solanaceae</taxon>
        <taxon>Solanoideae</taxon>
        <taxon>Solaneae</taxon>
        <taxon>Solanum</taxon>
        <taxon>Solanum subgen. Lycopersicon</taxon>
    </lineage>
</organism>
<reference key="1">
    <citation type="journal article" date="2013" name="Plant J.">
        <title>The tomato cis-prenyltransferase gene family.</title>
        <authorList>
            <person name="Akhtar T.A."/>
            <person name="Matsuba Y."/>
            <person name="Schauvinhold I."/>
            <person name="Yu G."/>
            <person name="Lees H.A."/>
            <person name="Klein S.E."/>
            <person name="Pichersky E."/>
        </authorList>
    </citation>
    <scope>NUCLEOTIDE SEQUENCE [GENOMIC DNA]</scope>
    <scope>FUNCTION</scope>
    <scope>CATALYTIC ACTIVITY</scope>
    <scope>COFACTOR</scope>
    <scope>SUBCELLULAR LOCATION</scope>
    <scope>TISSUE SPECIFICITY</scope>
</reference>
<reference key="2">
    <citation type="journal article" date="2012" name="Nature">
        <title>The tomato genome sequence provides insights into fleshy fruit evolution.</title>
        <authorList>
            <consortium name="Tomato Genome Consortium"/>
        </authorList>
    </citation>
    <scope>NUCLEOTIDE SEQUENCE [LARGE SCALE GENOMIC DNA]</scope>
    <source>
        <strain>cv. Heinz 1706</strain>
    </source>
</reference>
<feature type="transit peptide" description="Chloroplast" evidence="2">
    <location>
        <begin position="1"/>
        <end position="42"/>
    </location>
</feature>
<feature type="chain" id="PRO_0000450936" description="Dehydrodolichyl diphosphate synthase CPT5, chloroplastic">
    <location>
        <begin position="43"/>
        <end position="313"/>
    </location>
</feature>
<feature type="active site" evidence="1">
    <location>
        <position position="89"/>
    </location>
</feature>
<gene>
    <name evidence="4" type="primary">CPT5</name>
    <name evidence="5" type="ordered locus">Solyc00g136560</name>
    <name evidence="5" type="ordered locus">Solyc10g085140</name>
</gene>
<sequence length="313" mass="35540">MAFSFQLQQVFPFPVKFCSQPKSIKLQIFPNLTKRLPIHPLASAQNNATSNIDHNYIAMDESSINEEEVPLPTELSRELMPKHIAVIMDGNRRWAKRRGLPVALGYAAGIRVLRNFVKLSYNWGISALTLFAFSSENWFRPKAEVDLLMGLFDKVLKDELENLARTGIRLSIIGDASQLPKSLQDLIDKAVMATKANSRLHILVAINYSGQYDVVQACQTIAQRVKDGNIEPEDINSLLVEQELQTKCTEFPSPDLLIRTSGELRLSNFLLWQLAYTELFFSHSQWPDFGEAEFLEALCSFQQRQRRYGGQSS</sequence>
<evidence type="ECO:0000250" key="1">
    <source>
        <dbReference type="UniProtKB" id="P60472"/>
    </source>
</evidence>
<evidence type="ECO:0000255" key="2"/>
<evidence type="ECO:0000269" key="3">
    <source>
    </source>
</evidence>
<evidence type="ECO:0000303" key="4">
    <source>
    </source>
</evidence>
<evidence type="ECO:0000305" key="5"/>